<comment type="function">
    <text evidence="2">One of the essential components for the initiation of protein synthesis. Protects formylmethionyl-tRNA from spontaneous hydrolysis and promotes its binding to the 30S ribosomal subunits. Also involved in the hydrolysis of GTP during the formation of the 70S ribosomal complex.</text>
</comment>
<comment type="subcellular location">
    <subcellularLocation>
        <location evidence="2">Cytoplasm</location>
    </subcellularLocation>
</comment>
<comment type="similarity">
    <text evidence="2">Belongs to the TRAFAC class translation factor GTPase superfamily. Classic translation factor GTPase family. IF-2 subfamily.</text>
</comment>
<name>IF2_ANOFW</name>
<proteinExistence type="inferred from homology"/>
<gene>
    <name evidence="2" type="primary">infB</name>
    <name type="ordered locus">Aflv_1695</name>
</gene>
<feature type="chain" id="PRO_1000117319" description="Translation initiation factor IF-2">
    <location>
        <begin position="1"/>
        <end position="723"/>
    </location>
</feature>
<feature type="domain" description="tr-type G">
    <location>
        <begin position="224"/>
        <end position="393"/>
    </location>
</feature>
<feature type="region of interest" description="Disordered" evidence="3">
    <location>
        <begin position="112"/>
        <end position="138"/>
    </location>
</feature>
<feature type="region of interest" description="G1" evidence="1">
    <location>
        <begin position="233"/>
        <end position="240"/>
    </location>
</feature>
<feature type="region of interest" description="G2" evidence="1">
    <location>
        <begin position="258"/>
        <end position="262"/>
    </location>
</feature>
<feature type="region of interest" description="G3" evidence="1">
    <location>
        <begin position="279"/>
        <end position="282"/>
    </location>
</feature>
<feature type="region of interest" description="G4" evidence="1">
    <location>
        <begin position="333"/>
        <end position="336"/>
    </location>
</feature>
<feature type="region of interest" description="G5" evidence="1">
    <location>
        <begin position="369"/>
        <end position="371"/>
    </location>
</feature>
<feature type="compositionally biased region" description="Basic residues" evidence="3">
    <location>
        <begin position="114"/>
        <end position="123"/>
    </location>
</feature>
<feature type="binding site" evidence="2">
    <location>
        <begin position="233"/>
        <end position="240"/>
    </location>
    <ligand>
        <name>GTP</name>
        <dbReference type="ChEBI" id="CHEBI:37565"/>
    </ligand>
</feature>
<feature type="binding site" evidence="2">
    <location>
        <begin position="279"/>
        <end position="283"/>
    </location>
    <ligand>
        <name>GTP</name>
        <dbReference type="ChEBI" id="CHEBI:37565"/>
    </ligand>
</feature>
<feature type="binding site" evidence="2">
    <location>
        <begin position="333"/>
        <end position="336"/>
    </location>
    <ligand>
        <name>GTP</name>
        <dbReference type="ChEBI" id="CHEBI:37565"/>
    </ligand>
</feature>
<reference key="1">
    <citation type="journal article" date="2008" name="Genome Biol.">
        <title>Encapsulated in silica: genome, proteome and physiology of the thermophilic bacterium Anoxybacillus flavithermus WK1.</title>
        <authorList>
            <person name="Saw J.H."/>
            <person name="Mountain B.W."/>
            <person name="Feng L."/>
            <person name="Omelchenko M.V."/>
            <person name="Hou S."/>
            <person name="Saito J.A."/>
            <person name="Stott M.B."/>
            <person name="Li D."/>
            <person name="Zhao G."/>
            <person name="Wu J."/>
            <person name="Galperin M.Y."/>
            <person name="Koonin E.V."/>
            <person name="Makarova K.S."/>
            <person name="Wolf Y.I."/>
            <person name="Rigden D.J."/>
            <person name="Dunfield P.F."/>
            <person name="Wang L."/>
            <person name="Alam M."/>
        </authorList>
    </citation>
    <scope>NUCLEOTIDE SEQUENCE [LARGE SCALE GENOMIC DNA]</scope>
    <source>
        <strain>DSM 21510 / WK1</strain>
    </source>
</reference>
<accession>B7GG75</accession>
<protein>
    <recommendedName>
        <fullName evidence="2">Translation initiation factor IF-2</fullName>
    </recommendedName>
</protein>
<keyword id="KW-0963">Cytoplasm</keyword>
<keyword id="KW-0342">GTP-binding</keyword>
<keyword id="KW-0396">Initiation factor</keyword>
<keyword id="KW-0547">Nucleotide-binding</keyword>
<keyword id="KW-0648">Protein biosynthesis</keyword>
<sequence>MSKMRVYEYAKKHNVSSKDVIHKLKEMNIDVSNHMTMIEADVVEQLDRSFSKEQKQELKKEEKKAPVKTPVLEQFEEDEDEVIQTKVPIKKAVVKNREGKKHDLQIQQKEKKIFNNKKNKKQKPQQAPQQEVQKKKEKELPKKITFEGSLTVAELAKKLGKEPSEIIKKLFMLGIIATINKDLDKDAIELICSDYGVEVEEKVTIDETEFETIEIVDNPEDLVERPPVVTIMGHVDHGKTTLLDSIRQTKVTEQEAGGITQHIGAYQVVVNGKKITFLDTPGHEAFTTMRARGAQVTDIVILVVAADDGVMPQTVEAINHAKAAKVPIIVAVNKIDKPTANPDRVMQELMEYELVPEEWGGDTIYCKLSALTGEGIDNLLEMILLVSEMEELKANPNRRATGTVIEAKLDKGRGPVATLLVQSGTLRVGDPIVVGYTYGRVRAMTNDLGRRVKEAGPSTPVEITGLNEVPQAGDRFMVFEDEKKARQIGEARAQKQIVQQRSVKARVSLDDLFEKIKQGEMKELNIIVKADVQGSVEALVAALQKIEVEGVRVKIIHSGVGAVTEYDIMLASASNAIVIGFNVRPDANAKRVAEAEKVDIRLHRIIYKVIEEIEAAMKGMLDPEYEEKVIGQAEVRQTFKVSKVGTIAGCYVTDGKITRDSSVRLIRQGIVVYEGQIDTLKRYKDDVKEVAQGYECGITIKNFNDIKEGDVIEAYVMQEVARK</sequence>
<dbReference type="EMBL" id="CP000922">
    <property type="protein sequence ID" value="ACJ34056.1"/>
    <property type="molecule type" value="Genomic_DNA"/>
</dbReference>
<dbReference type="RefSeq" id="WP_012575270.1">
    <property type="nucleotide sequence ID" value="NC_011567.1"/>
</dbReference>
<dbReference type="SMR" id="B7GG75"/>
<dbReference type="STRING" id="491915.Aflv_1695"/>
<dbReference type="GeneID" id="7037948"/>
<dbReference type="KEGG" id="afl:Aflv_1695"/>
<dbReference type="PATRIC" id="fig|491915.6.peg.1744"/>
<dbReference type="eggNOG" id="COG0532">
    <property type="taxonomic scope" value="Bacteria"/>
</dbReference>
<dbReference type="HOGENOM" id="CLU_006301_5_1_9"/>
<dbReference type="Proteomes" id="UP000000742">
    <property type="component" value="Chromosome"/>
</dbReference>
<dbReference type="GO" id="GO:0005829">
    <property type="term" value="C:cytosol"/>
    <property type="evidence" value="ECO:0007669"/>
    <property type="project" value="TreeGrafter"/>
</dbReference>
<dbReference type="GO" id="GO:0005525">
    <property type="term" value="F:GTP binding"/>
    <property type="evidence" value="ECO:0007669"/>
    <property type="project" value="UniProtKB-KW"/>
</dbReference>
<dbReference type="GO" id="GO:0003924">
    <property type="term" value="F:GTPase activity"/>
    <property type="evidence" value="ECO:0007669"/>
    <property type="project" value="UniProtKB-UniRule"/>
</dbReference>
<dbReference type="GO" id="GO:0003743">
    <property type="term" value="F:translation initiation factor activity"/>
    <property type="evidence" value="ECO:0007669"/>
    <property type="project" value="UniProtKB-UniRule"/>
</dbReference>
<dbReference type="CDD" id="cd01887">
    <property type="entry name" value="IF2_eIF5B"/>
    <property type="match status" value="1"/>
</dbReference>
<dbReference type="CDD" id="cd03702">
    <property type="entry name" value="IF2_mtIF2_II"/>
    <property type="match status" value="1"/>
</dbReference>
<dbReference type="CDD" id="cd03692">
    <property type="entry name" value="mtIF2_IVc"/>
    <property type="match status" value="1"/>
</dbReference>
<dbReference type="FunFam" id="2.40.30.10:FF:000007">
    <property type="entry name" value="Translation initiation factor IF-2"/>
    <property type="match status" value="1"/>
</dbReference>
<dbReference type="FunFam" id="2.40.30.10:FF:000008">
    <property type="entry name" value="Translation initiation factor IF-2"/>
    <property type="match status" value="1"/>
</dbReference>
<dbReference type="FunFam" id="3.40.50.10050:FF:000001">
    <property type="entry name" value="Translation initiation factor IF-2"/>
    <property type="match status" value="1"/>
</dbReference>
<dbReference type="FunFam" id="3.40.50.300:FF:000019">
    <property type="entry name" value="Translation initiation factor IF-2"/>
    <property type="match status" value="1"/>
</dbReference>
<dbReference type="Gene3D" id="1.10.10.2480">
    <property type="match status" value="1"/>
</dbReference>
<dbReference type="Gene3D" id="3.40.50.300">
    <property type="entry name" value="P-loop containing nucleotide triphosphate hydrolases"/>
    <property type="match status" value="1"/>
</dbReference>
<dbReference type="Gene3D" id="2.40.30.10">
    <property type="entry name" value="Translation factors"/>
    <property type="match status" value="2"/>
</dbReference>
<dbReference type="Gene3D" id="3.40.50.10050">
    <property type="entry name" value="Translation initiation factor IF- 2, domain 3"/>
    <property type="match status" value="1"/>
</dbReference>
<dbReference type="HAMAP" id="MF_00100_B">
    <property type="entry name" value="IF_2_B"/>
    <property type="match status" value="1"/>
</dbReference>
<dbReference type="InterPro" id="IPR053905">
    <property type="entry name" value="EF-G-like_DII"/>
</dbReference>
<dbReference type="InterPro" id="IPR044145">
    <property type="entry name" value="IF2_II"/>
</dbReference>
<dbReference type="InterPro" id="IPR006847">
    <property type="entry name" value="IF2_N"/>
</dbReference>
<dbReference type="InterPro" id="IPR027417">
    <property type="entry name" value="P-loop_NTPase"/>
</dbReference>
<dbReference type="InterPro" id="IPR005225">
    <property type="entry name" value="Small_GTP-bd"/>
</dbReference>
<dbReference type="InterPro" id="IPR000795">
    <property type="entry name" value="T_Tr_GTP-bd_dom"/>
</dbReference>
<dbReference type="InterPro" id="IPR000178">
    <property type="entry name" value="TF_IF2_bacterial-like"/>
</dbReference>
<dbReference type="InterPro" id="IPR015760">
    <property type="entry name" value="TIF_IF2"/>
</dbReference>
<dbReference type="InterPro" id="IPR023115">
    <property type="entry name" value="TIF_IF2_dom3"/>
</dbReference>
<dbReference type="InterPro" id="IPR036925">
    <property type="entry name" value="TIF_IF2_dom3_sf"/>
</dbReference>
<dbReference type="InterPro" id="IPR009000">
    <property type="entry name" value="Transl_B-barrel_sf"/>
</dbReference>
<dbReference type="NCBIfam" id="TIGR00487">
    <property type="entry name" value="IF-2"/>
    <property type="match status" value="1"/>
</dbReference>
<dbReference type="NCBIfam" id="TIGR00231">
    <property type="entry name" value="small_GTP"/>
    <property type="match status" value="1"/>
</dbReference>
<dbReference type="PANTHER" id="PTHR43381:SF5">
    <property type="entry name" value="TR-TYPE G DOMAIN-CONTAINING PROTEIN"/>
    <property type="match status" value="1"/>
</dbReference>
<dbReference type="PANTHER" id="PTHR43381">
    <property type="entry name" value="TRANSLATION INITIATION FACTOR IF-2-RELATED"/>
    <property type="match status" value="1"/>
</dbReference>
<dbReference type="Pfam" id="PF22042">
    <property type="entry name" value="EF-G_D2"/>
    <property type="match status" value="1"/>
</dbReference>
<dbReference type="Pfam" id="PF00009">
    <property type="entry name" value="GTP_EFTU"/>
    <property type="match status" value="1"/>
</dbReference>
<dbReference type="Pfam" id="PF11987">
    <property type="entry name" value="IF-2"/>
    <property type="match status" value="1"/>
</dbReference>
<dbReference type="Pfam" id="PF04760">
    <property type="entry name" value="IF2_N"/>
    <property type="match status" value="2"/>
</dbReference>
<dbReference type="SUPFAM" id="SSF52156">
    <property type="entry name" value="Initiation factor IF2/eIF5b, domain 3"/>
    <property type="match status" value="1"/>
</dbReference>
<dbReference type="SUPFAM" id="SSF52540">
    <property type="entry name" value="P-loop containing nucleoside triphosphate hydrolases"/>
    <property type="match status" value="1"/>
</dbReference>
<dbReference type="SUPFAM" id="SSF50447">
    <property type="entry name" value="Translation proteins"/>
    <property type="match status" value="2"/>
</dbReference>
<dbReference type="PROSITE" id="PS51722">
    <property type="entry name" value="G_TR_2"/>
    <property type="match status" value="1"/>
</dbReference>
<dbReference type="PROSITE" id="PS01176">
    <property type="entry name" value="IF2"/>
    <property type="match status" value="1"/>
</dbReference>
<organism>
    <name type="scientific">Anoxybacillus flavithermus (strain DSM 21510 / WK1)</name>
    <dbReference type="NCBI Taxonomy" id="491915"/>
    <lineage>
        <taxon>Bacteria</taxon>
        <taxon>Bacillati</taxon>
        <taxon>Bacillota</taxon>
        <taxon>Bacilli</taxon>
        <taxon>Bacillales</taxon>
        <taxon>Anoxybacillaceae</taxon>
        <taxon>Anoxybacillus</taxon>
    </lineage>
</organism>
<evidence type="ECO:0000250" key="1"/>
<evidence type="ECO:0000255" key="2">
    <source>
        <dbReference type="HAMAP-Rule" id="MF_00100"/>
    </source>
</evidence>
<evidence type="ECO:0000256" key="3">
    <source>
        <dbReference type="SAM" id="MobiDB-lite"/>
    </source>
</evidence>